<keyword id="KW-0067">ATP-binding</keyword>
<keyword id="KW-0227">DNA damage</keyword>
<keyword id="KW-0233">DNA recombination</keyword>
<keyword id="KW-0234">DNA repair</keyword>
<keyword id="KW-0238">DNA-binding</keyword>
<keyword id="KW-0347">Helicase</keyword>
<keyword id="KW-0378">Hydrolase</keyword>
<keyword id="KW-0413">Isomerase</keyword>
<keyword id="KW-0496">Mitochondrion</keyword>
<keyword id="KW-0547">Nucleotide-binding</keyword>
<keyword id="KW-1185">Reference proteome</keyword>
<keyword id="KW-0809">Transit peptide</keyword>
<reference key="1">
    <citation type="journal article" date="2005" name="Science">
        <title>The genome of the African trypanosome Trypanosoma brucei.</title>
        <authorList>
            <person name="Berriman M."/>
            <person name="Ghedin E."/>
            <person name="Hertz-Fowler C."/>
            <person name="Blandin G."/>
            <person name="Renauld H."/>
            <person name="Bartholomeu D.C."/>
            <person name="Lennard N.J."/>
            <person name="Caler E."/>
            <person name="Hamlin N.E."/>
            <person name="Haas B."/>
            <person name="Bohme U."/>
            <person name="Hannick L."/>
            <person name="Aslett M.A."/>
            <person name="Shallom J."/>
            <person name="Marcello L."/>
            <person name="Hou L."/>
            <person name="Wickstead B."/>
            <person name="Alsmark U.C.M."/>
            <person name="Arrowsmith C."/>
            <person name="Atkin R.J."/>
            <person name="Barron A.J."/>
            <person name="Bringaud F."/>
            <person name="Brooks K."/>
            <person name="Carrington M."/>
            <person name="Cherevach I."/>
            <person name="Chillingworth T.J."/>
            <person name="Churcher C."/>
            <person name="Clark L.N."/>
            <person name="Corton C.H."/>
            <person name="Cronin A."/>
            <person name="Davies R.M."/>
            <person name="Doggett J."/>
            <person name="Djikeng A."/>
            <person name="Feldblyum T."/>
            <person name="Field M.C."/>
            <person name="Fraser A."/>
            <person name="Goodhead I."/>
            <person name="Hance Z."/>
            <person name="Harper D."/>
            <person name="Harris B.R."/>
            <person name="Hauser H."/>
            <person name="Hostetler J."/>
            <person name="Ivens A."/>
            <person name="Jagels K."/>
            <person name="Johnson D."/>
            <person name="Johnson J."/>
            <person name="Jones K."/>
            <person name="Kerhornou A.X."/>
            <person name="Koo H."/>
            <person name="Larke N."/>
            <person name="Landfear S."/>
            <person name="Larkin C."/>
            <person name="Leech V."/>
            <person name="Line A."/>
            <person name="Lord A."/>
            <person name="Macleod A."/>
            <person name="Mooney P.J."/>
            <person name="Moule S."/>
            <person name="Martin D.M."/>
            <person name="Morgan G.W."/>
            <person name="Mungall K."/>
            <person name="Norbertczak H."/>
            <person name="Ormond D."/>
            <person name="Pai G."/>
            <person name="Peacock C.S."/>
            <person name="Peterson J."/>
            <person name="Quail M.A."/>
            <person name="Rabbinowitsch E."/>
            <person name="Rajandream M.A."/>
            <person name="Reitter C."/>
            <person name="Salzberg S.L."/>
            <person name="Sanders M."/>
            <person name="Schobel S."/>
            <person name="Sharp S."/>
            <person name="Simmonds M."/>
            <person name="Simpson A.J."/>
            <person name="Tallon L."/>
            <person name="Turner C.M."/>
            <person name="Tait A."/>
            <person name="Tivey A.R."/>
            <person name="Van Aken S."/>
            <person name="Walker D."/>
            <person name="Wanless D."/>
            <person name="Wang S."/>
            <person name="White B."/>
            <person name="White O."/>
            <person name="Whitehead S."/>
            <person name="Woodward J."/>
            <person name="Wortman J."/>
            <person name="Adams M.D."/>
            <person name="Embley T.M."/>
            <person name="Gull K."/>
            <person name="Ullu E."/>
            <person name="Barry J.D."/>
            <person name="Fairlamb A.H."/>
            <person name="Opperdoes F."/>
            <person name="Barrell B.G."/>
            <person name="Donelson J.E."/>
            <person name="Hall N."/>
            <person name="Fraser C.M."/>
            <person name="Melville S.E."/>
            <person name="El-Sayed N.M.A."/>
        </authorList>
    </citation>
    <scope>NUCLEOTIDE SEQUENCE [LARGE SCALE GENOMIC DNA]</scope>
    <source>
        <strain evidence="9">927/4 GUTat10.1</strain>
    </source>
</reference>
<reference key="2">
    <citation type="journal article" date="2009" name="Mol. Cell">
        <title>Trypanosomes have six mitochondrial DNA helicases with one controlling kinetoplast maxicircle replication.</title>
        <authorList>
            <person name="Liu B."/>
            <person name="Wang J."/>
            <person name="Yaffe N."/>
            <person name="Lindsay M.E."/>
            <person name="Zhao Z."/>
            <person name="Zick A."/>
            <person name="Shlomai J."/>
            <person name="Englund P.T."/>
        </authorList>
    </citation>
    <scope>SUBCELLULAR LOCATION</scope>
    <scope>DISRUPTION PHENOTYPE</scope>
</reference>
<reference key="3">
    <citation type="journal article" date="2010" name="J. Biol. Chem.">
        <title>TbPIF1, a Trypanosoma brucei mitochondrial DNA helicase, is essential for kinetoplast minicircle replication.</title>
        <authorList>
            <person name="Liu B."/>
            <person name="Yildirir G."/>
            <person name="Wang J."/>
            <person name="Tolun G."/>
            <person name="Griffith J.D."/>
            <person name="Englund P.T."/>
        </authorList>
    </citation>
    <scope>FUNCTION</scope>
    <scope>CATALYTIC ACTIVITY</scope>
    <scope>COFACTOR</scope>
    <scope>SUBCELLULAR LOCATION</scope>
</reference>
<name>PIF1_TRYB2</name>
<feature type="transit peptide" description="Mitochondrion" evidence="2">
    <location>
        <begin position="1"/>
        <end position="52"/>
    </location>
</feature>
<feature type="chain" id="PRO_0000423747" description="ATP-dependent DNA helicase PIF1">
    <location>
        <begin position="53"/>
        <end position="929"/>
    </location>
</feature>
<feature type="DNA-binding region" evidence="2">
    <location>
        <begin position="776"/>
        <end position="796"/>
    </location>
</feature>
<feature type="region of interest" description="Disordered" evidence="3">
    <location>
        <begin position="55"/>
        <end position="89"/>
    </location>
</feature>
<feature type="region of interest" description="Disordered" evidence="3">
    <location>
        <begin position="902"/>
        <end position="929"/>
    </location>
</feature>
<feature type="compositionally biased region" description="Basic and acidic residues" evidence="3">
    <location>
        <begin position="56"/>
        <end position="66"/>
    </location>
</feature>
<feature type="compositionally biased region" description="Polar residues" evidence="3">
    <location>
        <begin position="74"/>
        <end position="89"/>
    </location>
</feature>
<feature type="compositionally biased region" description="Polar residues" evidence="3">
    <location>
        <begin position="916"/>
        <end position="929"/>
    </location>
</feature>
<feature type="binding site" evidence="2">
    <location>
        <begin position="302"/>
        <end position="309"/>
    </location>
    <ligand>
        <name>ATP</name>
        <dbReference type="ChEBI" id="CHEBI:30616"/>
    </ligand>
</feature>
<evidence type="ECO:0000250" key="1">
    <source>
        <dbReference type="UniProtKB" id="Q9H611"/>
    </source>
</evidence>
<evidence type="ECO:0000255" key="2"/>
<evidence type="ECO:0000256" key="3">
    <source>
        <dbReference type="SAM" id="MobiDB-lite"/>
    </source>
</evidence>
<evidence type="ECO:0000269" key="4">
    <source>
    </source>
</evidence>
<evidence type="ECO:0000269" key="5">
    <source>
    </source>
</evidence>
<evidence type="ECO:0000303" key="6">
    <source>
    </source>
</evidence>
<evidence type="ECO:0000305" key="7"/>
<evidence type="ECO:0000305" key="8">
    <source>
    </source>
</evidence>
<evidence type="ECO:0000312" key="9">
    <source>
        <dbReference type="Proteomes" id="UP000008524"/>
    </source>
</evidence>
<proteinExistence type="evidence at protein level"/>
<dbReference type="EC" id="5.6.2.3" evidence="8"/>
<dbReference type="EMBL" id="CH464491">
    <property type="protein sequence ID" value="EAN79650.1"/>
    <property type="molecule type" value="Genomic_DNA"/>
</dbReference>
<dbReference type="RefSeq" id="XP_828762.1">
    <property type="nucleotide sequence ID" value="XM_823669.1"/>
</dbReference>
<dbReference type="SMR" id="Q384Y1"/>
<dbReference type="STRING" id="185431.Q384Y1"/>
<dbReference type="PaxDb" id="5691-EAN79650"/>
<dbReference type="GeneID" id="3665289"/>
<dbReference type="KEGG" id="tbr:Tb11.02.4730"/>
<dbReference type="VEuPathDB" id="TriTrypDB:Tb927.11.6890"/>
<dbReference type="eggNOG" id="KOG0987">
    <property type="taxonomic scope" value="Eukaryota"/>
</dbReference>
<dbReference type="InParanoid" id="Q384Y1"/>
<dbReference type="OrthoDB" id="272985at2759"/>
<dbReference type="BRENDA" id="3.6.4.12">
    <property type="organism ID" value="6519"/>
</dbReference>
<dbReference type="Proteomes" id="UP000008524">
    <property type="component" value="Chromosome 11 Scaffold 1"/>
</dbReference>
<dbReference type="GO" id="GO:0005739">
    <property type="term" value="C:mitochondrion"/>
    <property type="evidence" value="ECO:0000314"/>
    <property type="project" value="GeneDB"/>
</dbReference>
<dbReference type="GO" id="GO:0031981">
    <property type="term" value="C:nuclear lumen"/>
    <property type="evidence" value="ECO:0000318"/>
    <property type="project" value="GO_Central"/>
</dbReference>
<dbReference type="GO" id="GO:0005634">
    <property type="term" value="C:nucleus"/>
    <property type="evidence" value="ECO:0000247"/>
    <property type="project" value="GeneDB"/>
</dbReference>
<dbReference type="GO" id="GO:0043139">
    <property type="term" value="F:5'-3' DNA helicase activity"/>
    <property type="evidence" value="ECO:0000318"/>
    <property type="project" value="GO_Central"/>
</dbReference>
<dbReference type="GO" id="GO:0005524">
    <property type="term" value="F:ATP binding"/>
    <property type="evidence" value="ECO:0007669"/>
    <property type="project" value="UniProtKB-KW"/>
</dbReference>
<dbReference type="GO" id="GO:0016887">
    <property type="term" value="F:ATP hydrolysis activity"/>
    <property type="evidence" value="ECO:0007669"/>
    <property type="project" value="InterPro"/>
</dbReference>
<dbReference type="GO" id="GO:0003677">
    <property type="term" value="F:DNA binding"/>
    <property type="evidence" value="ECO:0007669"/>
    <property type="project" value="UniProtKB-KW"/>
</dbReference>
<dbReference type="GO" id="GO:0000287">
    <property type="term" value="F:magnesium ion binding"/>
    <property type="evidence" value="ECO:0000314"/>
    <property type="project" value="GeneDB"/>
</dbReference>
<dbReference type="GO" id="GO:0051276">
    <property type="term" value="P:chromosome organization"/>
    <property type="evidence" value="ECO:0000247"/>
    <property type="project" value="GeneDB"/>
</dbReference>
<dbReference type="GO" id="GO:0006310">
    <property type="term" value="P:DNA recombination"/>
    <property type="evidence" value="ECO:0000247"/>
    <property type="project" value="GeneDB"/>
</dbReference>
<dbReference type="GO" id="GO:0006281">
    <property type="term" value="P:DNA repair"/>
    <property type="evidence" value="ECO:0007669"/>
    <property type="project" value="UniProtKB-KW"/>
</dbReference>
<dbReference type="GO" id="GO:0000723">
    <property type="term" value="P:telomere maintenance"/>
    <property type="evidence" value="ECO:0000247"/>
    <property type="project" value="GeneDB"/>
</dbReference>
<dbReference type="CDD" id="cd18037">
    <property type="entry name" value="DEXSc_Pif1_like"/>
    <property type="match status" value="1"/>
</dbReference>
<dbReference type="CDD" id="cd18809">
    <property type="entry name" value="SF1_C_RecD"/>
    <property type="match status" value="1"/>
</dbReference>
<dbReference type="FunFam" id="3.40.50.300:FF:001824">
    <property type="entry name" value="ATP-dependent DNA helicase"/>
    <property type="match status" value="1"/>
</dbReference>
<dbReference type="Gene3D" id="3.40.50.300">
    <property type="entry name" value="P-loop containing nucleotide triphosphate hydrolases"/>
    <property type="match status" value="1"/>
</dbReference>
<dbReference type="InterPro" id="IPR003593">
    <property type="entry name" value="AAA+_ATPase"/>
</dbReference>
<dbReference type="InterPro" id="IPR010285">
    <property type="entry name" value="DNA_helicase_pif1-like_DEAD"/>
</dbReference>
<dbReference type="InterPro" id="IPR027417">
    <property type="entry name" value="P-loop_NTPase"/>
</dbReference>
<dbReference type="InterPro" id="IPR051055">
    <property type="entry name" value="PIF1_helicase"/>
</dbReference>
<dbReference type="PANTHER" id="PTHR47642">
    <property type="entry name" value="ATP-DEPENDENT DNA HELICASE"/>
    <property type="match status" value="1"/>
</dbReference>
<dbReference type="PANTHER" id="PTHR47642:SF6">
    <property type="entry name" value="ATP-DEPENDENT DNA HELICASE"/>
    <property type="match status" value="1"/>
</dbReference>
<dbReference type="Pfam" id="PF05970">
    <property type="entry name" value="PIF1"/>
    <property type="match status" value="1"/>
</dbReference>
<dbReference type="SMART" id="SM00382">
    <property type="entry name" value="AAA"/>
    <property type="match status" value="1"/>
</dbReference>
<dbReference type="SUPFAM" id="SSF52540">
    <property type="entry name" value="P-loop containing nucleoside triphosphate hydrolases"/>
    <property type="match status" value="2"/>
</dbReference>
<gene>
    <name evidence="6" type="primary">PIF1</name>
    <name type="ORF">Tb11.02.4730</name>
</gene>
<organism>
    <name type="scientific">Trypanosoma brucei brucei (strain 927/4 GUTat10.1)</name>
    <dbReference type="NCBI Taxonomy" id="185431"/>
    <lineage>
        <taxon>Eukaryota</taxon>
        <taxon>Discoba</taxon>
        <taxon>Euglenozoa</taxon>
        <taxon>Kinetoplastea</taxon>
        <taxon>Metakinetoplastina</taxon>
        <taxon>Trypanosomatida</taxon>
        <taxon>Trypanosomatidae</taxon>
        <taxon>Trypanosoma</taxon>
    </lineage>
</organism>
<protein>
    <recommendedName>
        <fullName evidence="6">ATP-dependent DNA helicase PIF1</fullName>
        <ecNumber evidence="8">5.6.2.3</ecNumber>
    </recommendedName>
    <alternativeName>
        <fullName evidence="7">DNA 5'-3' helicase PIF1</fullName>
    </alternativeName>
    <alternativeName>
        <fullName>DNA repair and recombination helicase PIF1</fullName>
    </alternativeName>
</protein>
<accession>Q384Y1</accession>
<sequence length="929" mass="102508">MLRRLLQPAYNVALSGTSASTLPRKSASVGLVRTALMPVDYNAGALFCAMRFTSGTEKERKREPKRGSKRRSKATTTLSTPTDAQTSVTGAREGVALPQENMPDAIQPPATLEVRAAEVKEEPLAATPPQIQPQEETMGPIDGEPQLPLHSTLVYNALTGRMTSETSPSFLCLKSIGFGVNNKRQLYVEKPDVLRDLAQRMRKGTATLPSNWPVTIIRALGVILRNRRVEDPAEAIQQMMQVKINNLTHSRYAAVVNAVGDTDLQNILDGGLADEFVAVDLNEEQEKVINLALKGHLMYIGGSAGTGKTVLLRALCRRMQAEGLRVAMTATTGVAGCHIGGSTFHHAMGVSAQGDFVRKNHLLSYDAIIIDEVSMLPKKMFEEFDRVLREEAGAPDVPFGGVQIILCGDFLQLGVINEPPIIHSTTFREKFVKIRLETQVRQAKSSLFADALQQMRVGLVPESLTASVEQLPPGTMVPAAVNLLPTNKEVNTANEEELKRLPGDAVTLTPETGITALRCDTTATLLMRTTKDFKVEEFTKHLRGLLQATVDIPRASMVSAYRIYEDGHAVRVYLPQSESVAWRDAIRERFLEVAGLINDLDIGATVTEIIPSGDGLHTPEHEECLQRLMAKHPIAQPLTLKKGCRVLLRTNLTSRLVNGSIGTVVDFVECSMENIPVALRCERVNRCVDRYRIYCTMECGMPVPLLPVVKFHSGETIVVPPWEFLVGGNPITQYYSLSSVSLPLSLAYAFTVHKVQGLTLVGRVHLELSRMWPCEHLLYVAMSRVRNPEQLSMSSFDPKMVLANEACVKFDRELNTVDNLPSLAEYPVSSWKRCNDMVYHLRRQGTSLDRYLQNGAAKEGGSVPVQQLGLSGPVKGSLEHSMVVSRRLRKLIKQTERTIRMHERRQKKMAVEGAKQTDTTKASSGESLE</sequence>
<comment type="function">
    <text evidence="5">DNA-dependent ATPase and probable 5'-3' DNA helicase required for the maintenance of mitochondrial (kinetoplast) genome stability. Essential for replication of kinetoplast minicircles. Involved in the segregation of minicircle progeny.</text>
</comment>
<comment type="catalytic activity">
    <reaction evidence="8">
        <text>Couples ATP hydrolysis with the unwinding of duplex DNA at the replication fork by translocating in the 5'-3' direction. This creates two antiparallel DNA single strands (ssDNA). The leading ssDNA polymer is the template for DNA polymerase III holoenzyme which synthesizes a continuous strand.</text>
        <dbReference type="EC" id="5.6.2.3"/>
    </reaction>
</comment>
<comment type="catalytic activity">
    <reaction evidence="5">
        <text>ATP + H2O = ADP + phosphate + H(+)</text>
        <dbReference type="Rhea" id="RHEA:13065"/>
        <dbReference type="ChEBI" id="CHEBI:15377"/>
        <dbReference type="ChEBI" id="CHEBI:15378"/>
        <dbReference type="ChEBI" id="CHEBI:30616"/>
        <dbReference type="ChEBI" id="CHEBI:43474"/>
        <dbReference type="ChEBI" id="CHEBI:456216"/>
        <dbReference type="EC" id="5.6.2.3"/>
    </reaction>
</comment>
<comment type="cofactor">
    <cofactor evidence="5">
        <name>Mg(2+)</name>
        <dbReference type="ChEBI" id="CHEBI:18420"/>
    </cofactor>
</comment>
<comment type="subunit">
    <text evidence="1">Monomer.</text>
</comment>
<comment type="subcellular location">
    <subcellularLocation>
        <location evidence="4 5">Mitochondrion</location>
    </subcellularLocation>
    <text evidence="5">Localizes to the antipodal sites flanking the kDNA disk (PubMed:20042610).</text>
</comment>
<comment type="disruption phenotype">
    <text evidence="4">Essential, it cannot be deleted.</text>
</comment>
<comment type="similarity">
    <text evidence="7">Belongs to the helicase family. PIF1 subfamily.</text>
</comment>